<organism>
    <name type="scientific">Zinnia elegans</name>
    <name type="common">Garden zinnia</name>
    <name type="synonym">Zinnia violacea</name>
    <dbReference type="NCBI Taxonomy" id="34245"/>
    <lineage>
        <taxon>Eukaryota</taxon>
        <taxon>Viridiplantae</taxon>
        <taxon>Streptophyta</taxon>
        <taxon>Embryophyta</taxon>
        <taxon>Tracheophyta</taxon>
        <taxon>Spermatophyta</taxon>
        <taxon>Magnoliopsida</taxon>
        <taxon>eudicotyledons</taxon>
        <taxon>Gunneridae</taxon>
        <taxon>Pentapetalae</taxon>
        <taxon>asterids</taxon>
        <taxon>campanulids</taxon>
        <taxon>Asterales</taxon>
        <taxon>Asteraceae</taxon>
        <taxon>Asteroideae</taxon>
        <taxon>Heliantheae alliance</taxon>
        <taxon>Heliantheae</taxon>
        <taxon>Zinnia</taxon>
    </lineage>
</organism>
<feature type="chain" id="PRO_0000341529" description="Unknown protein 6">
    <location>
        <begin position="1" status="less than"/>
        <end position="9" status="greater than"/>
    </location>
</feature>
<feature type="unsure residue" description="I or L">
    <location>
        <position position="5"/>
    </location>
</feature>
<feature type="unsure residue" description="I or L">
    <location>
        <position position="6"/>
    </location>
</feature>
<feature type="non-terminal residue">
    <location>
        <position position="1"/>
    </location>
</feature>
<feature type="non-terminal residue">
    <location>
        <position position="9"/>
    </location>
</feature>
<reference evidence="1" key="1">
    <citation type="submission" date="2007-12" db="UniProtKB">
        <authorList>
            <person name="Gabaldon C."/>
            <person name="Gomez Ros L.V."/>
            <person name="Novo Uzal E."/>
            <person name="Ros Barcelo A."/>
        </authorList>
    </citation>
    <scope>PROTEIN SEQUENCE</scope>
    <source>
        <strain>cv. Envy</strain>
        <tissue>Callus</tissue>
    </source>
</reference>
<protein>
    <recommendedName>
        <fullName>Unknown protein 6</fullName>
    </recommendedName>
</protein>
<evidence type="ECO:0000305" key="1"/>
<name>UP06_ZINEL</name>
<sequence>IGSFIINPR</sequence>
<accession>P85419</accession>
<proteinExistence type="evidence at protein level"/>
<keyword id="KW-0903">Direct protein sequencing</keyword>